<protein>
    <recommendedName>
        <fullName evidence="1">UDP-N-acetylenolpyruvoylglucosamine reductase</fullName>
        <ecNumber evidence="1">1.3.1.98</ecNumber>
    </recommendedName>
    <alternativeName>
        <fullName evidence="1">UDP-N-acetylmuramate dehydrogenase</fullName>
    </alternativeName>
</protein>
<organism>
    <name type="scientific">Carboxydothermus hydrogenoformans (strain ATCC BAA-161 / DSM 6008 / Z-2901)</name>
    <dbReference type="NCBI Taxonomy" id="246194"/>
    <lineage>
        <taxon>Bacteria</taxon>
        <taxon>Bacillati</taxon>
        <taxon>Bacillota</taxon>
        <taxon>Clostridia</taxon>
        <taxon>Thermoanaerobacterales</taxon>
        <taxon>Thermoanaerobacteraceae</taxon>
        <taxon>Carboxydothermus</taxon>
    </lineage>
</organism>
<sequence>MDKAKLKEELTKRISSPVLENEPLAQHTTWKIGGPADFLIEPQSIEELSLVIRFLTENAVNFRVIGNGSNILVLDRGFRGVIIKTKKINKVEITAGGQVFAEAGVLLPALAARALKVGLSGLEELCAIPGSVGGAIRQNAGAHGKEIKDVLKRVWTINERGELKEFFANECGFKYRSSRFKEEKQWIVKAEFSLNPGDKKEILKKIREFREKRLASQPLEFPNAGSVFKNPEGIPAWKLIKEAGAQGLKKGGAMVSEKHANFIINTGGASAADVIYLINKIQELVWKKFSVKLLLEVEVLGE</sequence>
<accession>Q3AAE8</accession>
<proteinExistence type="inferred from homology"/>
<comment type="function">
    <text evidence="1">Cell wall formation.</text>
</comment>
<comment type="catalytic activity">
    <reaction evidence="1">
        <text>UDP-N-acetyl-alpha-D-muramate + NADP(+) = UDP-N-acetyl-3-O-(1-carboxyvinyl)-alpha-D-glucosamine + NADPH + H(+)</text>
        <dbReference type="Rhea" id="RHEA:12248"/>
        <dbReference type="ChEBI" id="CHEBI:15378"/>
        <dbReference type="ChEBI" id="CHEBI:57783"/>
        <dbReference type="ChEBI" id="CHEBI:58349"/>
        <dbReference type="ChEBI" id="CHEBI:68483"/>
        <dbReference type="ChEBI" id="CHEBI:70757"/>
        <dbReference type="EC" id="1.3.1.98"/>
    </reaction>
</comment>
<comment type="cofactor">
    <cofactor evidence="1">
        <name>FAD</name>
        <dbReference type="ChEBI" id="CHEBI:57692"/>
    </cofactor>
</comment>
<comment type="pathway">
    <text evidence="1">Cell wall biogenesis; peptidoglycan biosynthesis.</text>
</comment>
<comment type="subcellular location">
    <subcellularLocation>
        <location evidence="1">Cytoplasm</location>
    </subcellularLocation>
</comment>
<comment type="similarity">
    <text evidence="1">Belongs to the MurB family.</text>
</comment>
<gene>
    <name evidence="1" type="primary">murB</name>
    <name type="ordered locus">CHY_2067</name>
</gene>
<evidence type="ECO:0000255" key="1">
    <source>
        <dbReference type="HAMAP-Rule" id="MF_00037"/>
    </source>
</evidence>
<keyword id="KW-0131">Cell cycle</keyword>
<keyword id="KW-0132">Cell division</keyword>
<keyword id="KW-0133">Cell shape</keyword>
<keyword id="KW-0961">Cell wall biogenesis/degradation</keyword>
<keyword id="KW-0963">Cytoplasm</keyword>
<keyword id="KW-0274">FAD</keyword>
<keyword id="KW-0285">Flavoprotein</keyword>
<keyword id="KW-0521">NADP</keyword>
<keyword id="KW-0560">Oxidoreductase</keyword>
<keyword id="KW-0573">Peptidoglycan synthesis</keyword>
<keyword id="KW-1185">Reference proteome</keyword>
<name>MURB_CARHZ</name>
<feature type="chain" id="PRO_0000224674" description="UDP-N-acetylenolpyruvoylglucosamine reductase">
    <location>
        <begin position="1"/>
        <end position="302"/>
    </location>
</feature>
<feature type="domain" description="FAD-binding PCMH-type" evidence="1">
    <location>
        <begin position="31"/>
        <end position="213"/>
    </location>
</feature>
<feature type="active site" evidence="1">
    <location>
        <position position="176"/>
    </location>
</feature>
<feature type="active site" description="Proton donor" evidence="1">
    <location>
        <position position="226"/>
    </location>
</feature>
<feature type="active site" evidence="1">
    <location>
        <position position="296"/>
    </location>
</feature>
<dbReference type="EC" id="1.3.1.98" evidence="1"/>
<dbReference type="EMBL" id="CP000141">
    <property type="protein sequence ID" value="ABB15062.1"/>
    <property type="molecule type" value="Genomic_DNA"/>
</dbReference>
<dbReference type="RefSeq" id="WP_011344959.1">
    <property type="nucleotide sequence ID" value="NC_007503.1"/>
</dbReference>
<dbReference type="SMR" id="Q3AAE8"/>
<dbReference type="FunCoup" id="Q3AAE8">
    <property type="interactions" value="330"/>
</dbReference>
<dbReference type="STRING" id="246194.CHY_2067"/>
<dbReference type="KEGG" id="chy:CHY_2067"/>
<dbReference type="eggNOG" id="COG0812">
    <property type="taxonomic scope" value="Bacteria"/>
</dbReference>
<dbReference type="HOGENOM" id="CLU_035304_1_1_9"/>
<dbReference type="InParanoid" id="Q3AAE8"/>
<dbReference type="OrthoDB" id="9804753at2"/>
<dbReference type="UniPathway" id="UPA00219"/>
<dbReference type="Proteomes" id="UP000002706">
    <property type="component" value="Chromosome"/>
</dbReference>
<dbReference type="GO" id="GO:0005829">
    <property type="term" value="C:cytosol"/>
    <property type="evidence" value="ECO:0007669"/>
    <property type="project" value="TreeGrafter"/>
</dbReference>
<dbReference type="GO" id="GO:0071949">
    <property type="term" value="F:FAD binding"/>
    <property type="evidence" value="ECO:0007669"/>
    <property type="project" value="InterPro"/>
</dbReference>
<dbReference type="GO" id="GO:0008762">
    <property type="term" value="F:UDP-N-acetylmuramate dehydrogenase activity"/>
    <property type="evidence" value="ECO:0007669"/>
    <property type="project" value="UniProtKB-UniRule"/>
</dbReference>
<dbReference type="GO" id="GO:0051301">
    <property type="term" value="P:cell division"/>
    <property type="evidence" value="ECO:0007669"/>
    <property type="project" value="UniProtKB-KW"/>
</dbReference>
<dbReference type="GO" id="GO:0071555">
    <property type="term" value="P:cell wall organization"/>
    <property type="evidence" value="ECO:0007669"/>
    <property type="project" value="UniProtKB-KW"/>
</dbReference>
<dbReference type="GO" id="GO:0009252">
    <property type="term" value="P:peptidoglycan biosynthetic process"/>
    <property type="evidence" value="ECO:0007669"/>
    <property type="project" value="UniProtKB-UniRule"/>
</dbReference>
<dbReference type="GO" id="GO:0008360">
    <property type="term" value="P:regulation of cell shape"/>
    <property type="evidence" value="ECO:0007669"/>
    <property type="project" value="UniProtKB-KW"/>
</dbReference>
<dbReference type="Gene3D" id="3.30.465.10">
    <property type="match status" value="1"/>
</dbReference>
<dbReference type="Gene3D" id="3.90.78.10">
    <property type="entry name" value="UDP-N-acetylenolpyruvoylglucosamine reductase, C-terminal domain"/>
    <property type="match status" value="1"/>
</dbReference>
<dbReference type="Gene3D" id="3.30.43.10">
    <property type="entry name" value="Uridine Diphospho-n-acetylenolpyruvylglucosamine Reductase, domain 2"/>
    <property type="match status" value="1"/>
</dbReference>
<dbReference type="HAMAP" id="MF_00037">
    <property type="entry name" value="MurB"/>
    <property type="match status" value="1"/>
</dbReference>
<dbReference type="InterPro" id="IPR016166">
    <property type="entry name" value="FAD-bd_PCMH"/>
</dbReference>
<dbReference type="InterPro" id="IPR036318">
    <property type="entry name" value="FAD-bd_PCMH-like_sf"/>
</dbReference>
<dbReference type="InterPro" id="IPR016167">
    <property type="entry name" value="FAD-bd_PCMH_sub1"/>
</dbReference>
<dbReference type="InterPro" id="IPR016169">
    <property type="entry name" value="FAD-bd_PCMH_sub2"/>
</dbReference>
<dbReference type="InterPro" id="IPR003170">
    <property type="entry name" value="MurB"/>
</dbReference>
<dbReference type="InterPro" id="IPR011601">
    <property type="entry name" value="MurB_C"/>
</dbReference>
<dbReference type="InterPro" id="IPR036635">
    <property type="entry name" value="MurB_C_sf"/>
</dbReference>
<dbReference type="InterPro" id="IPR006094">
    <property type="entry name" value="Oxid_FAD_bind_N"/>
</dbReference>
<dbReference type="NCBIfam" id="TIGR00179">
    <property type="entry name" value="murB"/>
    <property type="match status" value="1"/>
</dbReference>
<dbReference type="NCBIfam" id="NF010480">
    <property type="entry name" value="PRK13905.1"/>
    <property type="match status" value="1"/>
</dbReference>
<dbReference type="PANTHER" id="PTHR21071">
    <property type="entry name" value="UDP-N-ACETYLENOLPYRUVOYLGLUCOSAMINE REDUCTASE"/>
    <property type="match status" value="1"/>
</dbReference>
<dbReference type="PANTHER" id="PTHR21071:SF4">
    <property type="entry name" value="UDP-N-ACETYLENOLPYRUVOYLGLUCOSAMINE REDUCTASE"/>
    <property type="match status" value="1"/>
</dbReference>
<dbReference type="Pfam" id="PF01565">
    <property type="entry name" value="FAD_binding_4"/>
    <property type="match status" value="1"/>
</dbReference>
<dbReference type="Pfam" id="PF02873">
    <property type="entry name" value="MurB_C"/>
    <property type="match status" value="1"/>
</dbReference>
<dbReference type="SUPFAM" id="SSF56176">
    <property type="entry name" value="FAD-binding/transporter-associated domain-like"/>
    <property type="match status" value="1"/>
</dbReference>
<dbReference type="SUPFAM" id="SSF56194">
    <property type="entry name" value="Uridine diphospho-N-Acetylenolpyruvylglucosamine reductase, MurB, C-terminal domain"/>
    <property type="match status" value="1"/>
</dbReference>
<dbReference type="PROSITE" id="PS51387">
    <property type="entry name" value="FAD_PCMH"/>
    <property type="match status" value="1"/>
</dbReference>
<reference key="1">
    <citation type="journal article" date="2005" name="PLoS Genet.">
        <title>Life in hot carbon monoxide: the complete genome sequence of Carboxydothermus hydrogenoformans Z-2901.</title>
        <authorList>
            <person name="Wu M."/>
            <person name="Ren Q."/>
            <person name="Durkin A.S."/>
            <person name="Daugherty S.C."/>
            <person name="Brinkac L.M."/>
            <person name="Dodson R.J."/>
            <person name="Madupu R."/>
            <person name="Sullivan S.A."/>
            <person name="Kolonay J.F."/>
            <person name="Nelson W.C."/>
            <person name="Tallon L.J."/>
            <person name="Jones K.M."/>
            <person name="Ulrich L.E."/>
            <person name="Gonzalez J.M."/>
            <person name="Zhulin I.B."/>
            <person name="Robb F.T."/>
            <person name="Eisen J.A."/>
        </authorList>
    </citation>
    <scope>NUCLEOTIDE SEQUENCE [LARGE SCALE GENOMIC DNA]</scope>
    <source>
        <strain>ATCC BAA-161 / DSM 6008 / Z-2901</strain>
    </source>
</reference>